<dbReference type="EMBL" id="AY061874">
    <property type="protein sequence ID" value="AAL33768.1"/>
    <property type="molecule type" value="Genomic_DNA"/>
</dbReference>
<dbReference type="EMBL" id="CP000253">
    <property type="protein sequence ID" value="ABD30197.1"/>
    <property type="molecule type" value="Genomic_DNA"/>
</dbReference>
<dbReference type="RefSeq" id="WP_000160859.1">
    <property type="nucleotide sequence ID" value="NZ_LS483365.1"/>
</dbReference>
<dbReference type="RefSeq" id="YP_499627.1">
    <property type="nucleotide sequence ID" value="NC_007795.1"/>
</dbReference>
<dbReference type="PDB" id="2ITE">
    <property type="method" value="X-ray"/>
    <property type="resolution" value="1.60 A"/>
    <property type="chains" value="A/B=62-184"/>
</dbReference>
<dbReference type="PDB" id="2ITF">
    <property type="method" value="X-ray"/>
    <property type="resolution" value="1.90 A"/>
    <property type="chains" value="A/B/C/D=62-184"/>
</dbReference>
<dbReference type="PDBsum" id="2ITE"/>
<dbReference type="PDBsum" id="2ITF"/>
<dbReference type="SMR" id="Q2FZE9"/>
<dbReference type="STRING" id="93061.SAOUHSC_01081"/>
<dbReference type="PaxDb" id="1280-SAXN108_1125"/>
<dbReference type="ABCD" id="Q2FZE9">
    <property type="antibodies" value="2 sequenced antibodies"/>
</dbReference>
<dbReference type="GeneID" id="3919243"/>
<dbReference type="KEGG" id="sao:SAOUHSC_01081"/>
<dbReference type="PATRIC" id="fig|93061.5.peg.991"/>
<dbReference type="eggNOG" id="COG5386">
    <property type="taxonomic scope" value="Bacteria"/>
</dbReference>
<dbReference type="HOGENOM" id="CLU_068057_0_0_9"/>
<dbReference type="OrthoDB" id="2413751at2"/>
<dbReference type="EvolutionaryTrace" id="Q2FZE9"/>
<dbReference type="PRO" id="PR:Q2FZE9"/>
<dbReference type="Proteomes" id="UP000008816">
    <property type="component" value="Chromosome"/>
</dbReference>
<dbReference type="GO" id="GO:0005576">
    <property type="term" value="C:extracellular region"/>
    <property type="evidence" value="ECO:0007669"/>
    <property type="project" value="UniProtKB-KW"/>
</dbReference>
<dbReference type="GO" id="GO:0046872">
    <property type="term" value="F:metal ion binding"/>
    <property type="evidence" value="ECO:0007669"/>
    <property type="project" value="UniProtKB-KW"/>
</dbReference>
<dbReference type="CDD" id="cd06920">
    <property type="entry name" value="NEAT"/>
    <property type="match status" value="1"/>
</dbReference>
<dbReference type="Gene3D" id="2.60.40.1850">
    <property type="match status" value="1"/>
</dbReference>
<dbReference type="InterPro" id="IPR050436">
    <property type="entry name" value="IsdA"/>
</dbReference>
<dbReference type="InterPro" id="IPR019931">
    <property type="entry name" value="LPXTG_anchor"/>
</dbReference>
<dbReference type="InterPro" id="IPR006635">
    <property type="entry name" value="NEAT_dom"/>
</dbReference>
<dbReference type="InterPro" id="IPR037250">
    <property type="entry name" value="NEAT_dom_sf"/>
</dbReference>
<dbReference type="NCBIfam" id="TIGR01167">
    <property type="entry name" value="LPXTG_anchor"/>
    <property type="match status" value="1"/>
</dbReference>
<dbReference type="PANTHER" id="PTHR37824">
    <property type="entry name" value="IRON-REGULATED SURFACE DETERMINANT PROTEIN C"/>
    <property type="match status" value="1"/>
</dbReference>
<dbReference type="PANTHER" id="PTHR37824:SF1">
    <property type="entry name" value="IRON-REGULATED SURFACE DETERMINANT PROTEIN C"/>
    <property type="match status" value="1"/>
</dbReference>
<dbReference type="Pfam" id="PF00746">
    <property type="entry name" value="Gram_pos_anchor"/>
    <property type="match status" value="1"/>
</dbReference>
<dbReference type="Pfam" id="PF05031">
    <property type="entry name" value="NEAT"/>
    <property type="match status" value="1"/>
</dbReference>
<dbReference type="SMART" id="SM00725">
    <property type="entry name" value="NEAT"/>
    <property type="match status" value="1"/>
</dbReference>
<dbReference type="SUPFAM" id="SSF158911">
    <property type="entry name" value="NEAT domain-like"/>
    <property type="match status" value="1"/>
</dbReference>
<dbReference type="PROSITE" id="PS50847">
    <property type="entry name" value="GRAM_POS_ANCHORING"/>
    <property type="match status" value="1"/>
</dbReference>
<dbReference type="PROSITE" id="PS50978">
    <property type="entry name" value="NEAT"/>
    <property type="match status" value="1"/>
</dbReference>
<keyword id="KW-0002">3D-structure</keyword>
<keyword id="KW-0134">Cell wall</keyword>
<keyword id="KW-0903">Direct protein sequencing</keyword>
<keyword id="KW-0349">Heme</keyword>
<keyword id="KW-0408">Iron</keyword>
<keyword id="KW-0479">Metal-binding</keyword>
<keyword id="KW-0572">Peptidoglycan-anchor</keyword>
<keyword id="KW-1185">Reference proteome</keyword>
<keyword id="KW-0964">Secreted</keyword>
<keyword id="KW-0732">Signal</keyword>
<reference key="1">
    <citation type="journal article" date="2002" name="Mol. Microbiol.">
        <title>Transferrin binding in Staphylococcus aureus: involvement of a cell wall-anchored protein.</title>
        <authorList>
            <person name="Taylor J.M."/>
            <person name="Heinrichs D.E."/>
        </authorList>
    </citation>
    <scope>NUCLEOTIDE SEQUENCE [GENOMIC DNA]</scope>
    <scope>PROTEIN SEQUENCE OF 47-60</scope>
    <scope>INTERACTION WITH TRANSFERRIN</scope>
    <scope>SUBCELLULAR LOCATION</scope>
</reference>
<reference key="2">
    <citation type="book" date="2006" name="Gram positive pathogens, 2nd edition">
        <title>The Staphylococcus aureus NCTC 8325 genome.</title>
        <editorList>
            <person name="Fischetti V."/>
            <person name="Novick R."/>
            <person name="Ferretti J."/>
            <person name="Portnoy D."/>
            <person name="Rood J."/>
        </editorList>
        <authorList>
            <person name="Gillaspy A.F."/>
            <person name="Worrell V."/>
            <person name="Orvis J."/>
            <person name="Roe B.A."/>
            <person name="Dyer D.W."/>
            <person name="Iandolo J.J."/>
        </authorList>
    </citation>
    <scope>NUCLEOTIDE SEQUENCE [LARGE SCALE GENOMIC DNA]</scope>
    <source>
        <strain>NCTC 8325 / PS 47</strain>
    </source>
</reference>
<reference key="3">
    <citation type="journal article" date="2002" name="Infect. Immun.">
        <title>Conservation, surface exposure, and in vivo expression of the Frp family of iron-regulated cell wall proteins in Staphylococcus aureus.</title>
        <authorList>
            <person name="Morrissey J.A."/>
            <person name="Cockayne A."/>
            <person name="Hammacott J."/>
            <person name="Bishop K."/>
            <person name="Denman-Johnson A."/>
            <person name="Hill P.J."/>
            <person name="Williams P."/>
        </authorList>
    </citation>
    <scope>PROTEIN SEQUENCE OF 47-56</scope>
    <scope>NON-SPECIFIC BINDING TO TRANSFERRIN AND PROTEIN A</scope>
    <scope>BINDING TO PLASTIC</scope>
    <scope>REGULATION BY FUR</scope>
</reference>
<reference key="4">
    <citation type="journal article" date="2004" name="Mol. Microbiol.">
        <title>IsdA of Staphylococcus aureus is a broad spectrum, iron-regulated adhesin.</title>
        <authorList>
            <person name="Clarke S.R."/>
            <person name="Wiltshire M.D."/>
            <person name="Foster S.J."/>
        </authorList>
    </citation>
    <scope>INTERACTION WITH HEMIN; FETUIN; HEMOGLOBIN; TRANSFERRIN; FIBRONECTIN AND FIBRINOGEN</scope>
    <scope>IRON-REGULATED EXPRESSION</scope>
    <scope>ROLE OF THE NEAT DOMAIN</scope>
</reference>
<reference key="5">
    <citation type="journal article" date="2006" name="Biochemistry">
        <title>Characterization of the heme binding properties of Staphylococcus aureus IsdA.</title>
        <authorList>
            <person name="Vermeiren C.L."/>
            <person name="Pluym M."/>
            <person name="Mack J."/>
            <person name="Heinrichs D.E."/>
            <person name="Stillman M.J."/>
        </authorList>
    </citation>
    <scope>SUBUNIT</scope>
</reference>
<reference key="6">
    <citation type="journal article" date="2008" name="J. Inorg. Biochem.">
        <title>Heme binding in the NEAT domains of IsdA and IsdC of Staphylococcus aureus.</title>
        <authorList>
            <person name="Pluym M."/>
            <person name="Muryoi N."/>
            <person name="Heinrichs D.E."/>
            <person name="Stillman M.J."/>
        </authorList>
    </citation>
    <scope>ROLE OF THE NEAT DOMAIN</scope>
</reference>
<reference key="7">
    <citation type="journal article" date="2007" name="Mol. Microbiol.">
        <title>Haem recognition by a Staphylococcus aureus NEAT domain.</title>
        <authorList>
            <person name="Grigg J.C."/>
            <person name="Vermeiren C.L."/>
            <person name="Heinrichs D.E."/>
            <person name="Murphy M.E.P."/>
        </authorList>
    </citation>
    <scope>X-RAY CRYSTALLOGRAPHY (1.6 ANGSTROMS) OF 62-184 OF APOPROTEIN AND IN COMPLEX WITH HEME</scope>
    <scope>ROLE IN IRON ACQUISITION</scope>
    <scope>DOMAIN</scope>
    <scope>MUTAGENESIS OF HIS-83; TYR-87; TYR-101; TYR-102; TYR-150; TYR-166 AND TYR-170</scope>
</reference>
<accession>Q2FZE9</accession>
<accession>Q9KW67</accession>
<evidence type="ECO:0000250" key="1"/>
<evidence type="ECO:0000250" key="2">
    <source>
        <dbReference type="UniProtKB" id="A6QG31"/>
    </source>
</evidence>
<evidence type="ECO:0000250" key="3">
    <source>
        <dbReference type="UniProtKB" id="Q7A152"/>
    </source>
</evidence>
<evidence type="ECO:0000255" key="4">
    <source>
        <dbReference type="PROSITE-ProRule" id="PRU00337"/>
    </source>
</evidence>
<evidence type="ECO:0000255" key="5">
    <source>
        <dbReference type="PROSITE-ProRule" id="PRU00477"/>
    </source>
</evidence>
<evidence type="ECO:0000256" key="6">
    <source>
        <dbReference type="SAM" id="MobiDB-lite"/>
    </source>
</evidence>
<evidence type="ECO:0000269" key="7">
    <source>
    </source>
</evidence>
<evidence type="ECO:0000305" key="8"/>
<evidence type="ECO:0007744" key="9">
    <source>
        <dbReference type="PDB" id="2ITE"/>
    </source>
</evidence>
<evidence type="ECO:0007829" key="10">
    <source>
        <dbReference type="PDB" id="2ITE"/>
    </source>
</evidence>
<name>ISDA_STAA8</name>
<organism>
    <name type="scientific">Staphylococcus aureus (strain NCTC 8325 / PS 47)</name>
    <dbReference type="NCBI Taxonomy" id="93061"/>
    <lineage>
        <taxon>Bacteria</taxon>
        <taxon>Bacillati</taxon>
        <taxon>Bacillota</taxon>
        <taxon>Bacilli</taxon>
        <taxon>Bacillales</taxon>
        <taxon>Staphylococcaceae</taxon>
        <taxon>Staphylococcus</taxon>
    </lineage>
</organism>
<feature type="signal peptide" evidence="1">
    <location>
        <begin position="1"/>
        <end position="46"/>
    </location>
</feature>
<feature type="chain" id="PRO_0000247966" description="Iron-regulated surface determinant protein A">
    <location>
        <begin position="47"/>
        <end position="316"/>
    </location>
</feature>
<feature type="propeptide" id="PRO_0000247967" description="Removed by sortase A" evidence="5">
    <location>
        <begin position="317"/>
        <end position="350"/>
    </location>
</feature>
<feature type="domain" description="NEAT" evidence="4">
    <location>
        <begin position="62"/>
        <end position="184"/>
    </location>
</feature>
<feature type="region of interest" description="Disordered" evidence="6">
    <location>
        <begin position="188"/>
        <end position="314"/>
    </location>
</feature>
<feature type="short sequence motif" description="LPXTG sorting signal" evidence="5">
    <location>
        <begin position="313"/>
        <end position="317"/>
    </location>
</feature>
<feature type="compositionally biased region" description="Low complexity" evidence="6">
    <location>
        <begin position="203"/>
        <end position="214"/>
    </location>
</feature>
<feature type="compositionally biased region" description="Polar residues" evidence="6">
    <location>
        <begin position="252"/>
        <end position="268"/>
    </location>
</feature>
<feature type="compositionally biased region" description="Polar residues" evidence="6">
    <location>
        <begin position="278"/>
        <end position="296"/>
    </location>
</feature>
<feature type="compositionally biased region" description="Basic and acidic residues" evidence="6">
    <location>
        <begin position="299"/>
        <end position="314"/>
    </location>
</feature>
<feature type="binding site" evidence="7">
    <location>
        <position position="75"/>
    </location>
    <ligand>
        <name>heme</name>
        <dbReference type="ChEBI" id="CHEBI:30413"/>
    </ligand>
</feature>
<feature type="binding site" evidence="7">
    <location>
        <position position="82"/>
    </location>
    <ligand>
        <name>heme</name>
        <dbReference type="ChEBI" id="CHEBI:30413"/>
    </ligand>
</feature>
<feature type="binding site" description="axial binding residue" evidence="7 9">
    <location>
        <position position="166"/>
    </location>
    <ligand>
        <name>heme</name>
        <dbReference type="ChEBI" id="CHEBI:30413"/>
    </ligand>
    <ligandPart>
        <name>Fe</name>
        <dbReference type="ChEBI" id="CHEBI:18248"/>
    </ligandPart>
</feature>
<feature type="modified residue" description="Pentaglycyl murein peptidoglycan amidated threonine" evidence="5">
    <location>
        <position position="316"/>
    </location>
</feature>
<feature type="mutagenesis site" description="Does not affect heme-binding." evidence="7">
    <original>H</original>
    <variation>A</variation>
    <location>
        <position position="83"/>
    </location>
</feature>
<feature type="mutagenesis site" description="Decreases heme-binding." evidence="7">
    <original>Y</original>
    <variation>A</variation>
    <location>
        <position position="87"/>
    </location>
</feature>
<feature type="mutagenesis site" description="Does not affect heme-binding." evidence="7">
    <original>Y</original>
    <variation>A</variation>
    <location>
        <position position="101"/>
    </location>
</feature>
<feature type="mutagenesis site" description="Does not affect heme-binding." evidence="7">
    <original>Y</original>
    <variation>A</variation>
    <location>
        <position position="102"/>
    </location>
</feature>
<feature type="mutagenesis site" description="Does not affect heme-binding." evidence="7">
    <original>Y</original>
    <variation>A</variation>
    <location>
        <position position="150"/>
    </location>
</feature>
<feature type="mutagenesis site" description="Almost abolishes heme-binding." evidence="7">
    <original>Y</original>
    <variation>A</variation>
    <location>
        <position position="166"/>
    </location>
</feature>
<feature type="mutagenesis site" description="Strongly decreases heme-binding." evidence="7">
    <original>Y</original>
    <variation>A</variation>
    <location>
        <position position="170"/>
    </location>
</feature>
<feature type="sequence conflict" description="In Ref. 1; AAL33768." evidence="8" ref="1">
    <original>T</original>
    <variation>A</variation>
    <location>
        <position position="105"/>
    </location>
</feature>
<feature type="sequence conflict" description="In Ref. 1; AAL33768." evidence="8" ref="1">
    <original>N</original>
    <variation>D</variation>
    <location>
        <position position="134"/>
    </location>
</feature>
<feature type="sequence conflict" description="In Ref. 1; AAL33768." evidence="8" ref="1">
    <original>T</original>
    <variation>A</variation>
    <location>
        <position position="222"/>
    </location>
</feature>
<feature type="sequence conflict" description="In Ref. 1; AAL33768." evidence="8" ref="1">
    <original>TT</original>
    <variation>AP</variation>
    <location>
        <begin position="225"/>
        <end position="226"/>
    </location>
</feature>
<feature type="sequence conflict" description="In Ref. 1; AAL33768." evidence="8" ref="1">
    <original>VEDNHS</original>
    <variation>NENRQT</variation>
    <location>
        <begin position="229"/>
        <end position="234"/>
    </location>
</feature>
<feature type="sequence conflict" description="In Ref. 1; AAL33768." evidence="8" ref="1">
    <original>TDT</original>
    <variation>SEA</variation>
    <location>
        <begin position="240"/>
        <end position="242"/>
    </location>
</feature>
<feature type="sequence conflict" description="In Ref. 1; AAL33768." evidence="8" ref="1">
    <original>TK</original>
    <variation>SQ</variation>
    <location>
        <begin position="247"/>
        <end position="248"/>
    </location>
</feature>
<feature type="sequence conflict" description="In Ref. 1; AAL33768." evidence="8" ref="1">
    <original>TAH</original>
    <variation>SAR</variation>
    <location>
        <begin position="251"/>
        <end position="253"/>
    </location>
</feature>
<feature type="sequence conflict" description="In Ref. 1; AAL33768." evidence="8" ref="1">
    <original>A</original>
    <variation>T</variation>
    <location>
        <position position="258"/>
    </location>
</feature>
<feature type="sequence conflict" description="In Ref. 1; AAL33768." evidence="8" ref="1">
    <original>E</original>
    <variation>D</variation>
    <location>
        <position position="263"/>
    </location>
</feature>
<feature type="sequence conflict" description="In Ref. 1; AAL33768." evidence="8" ref="1">
    <original>H</original>
    <variation>Q</variation>
    <location>
        <position position="300"/>
    </location>
</feature>
<feature type="sequence conflict" description="In Ref. 1; AA sequence." evidence="8" ref="1">
    <original>TP</original>
    <variation>VH</variation>
    <location>
        <begin position="303"/>
        <end position="304"/>
    </location>
</feature>
<feature type="sequence conflict" description="In Ref. 1; AA sequence." evidence="8" ref="1">
    <original>A</original>
    <variation>GPSKD</variation>
    <location>
        <position position="307"/>
    </location>
</feature>
<feature type="strand" evidence="10">
    <location>
        <begin position="65"/>
        <end position="69"/>
    </location>
</feature>
<feature type="strand" evidence="10">
    <location>
        <begin position="71"/>
        <end position="75"/>
    </location>
</feature>
<feature type="strand" evidence="10">
    <location>
        <begin position="78"/>
        <end position="81"/>
    </location>
</feature>
<feature type="helix" evidence="10">
    <location>
        <begin position="83"/>
        <end position="87"/>
    </location>
</feature>
<feature type="strand" evidence="10">
    <location>
        <begin position="90"/>
        <end position="97"/>
    </location>
</feature>
<feature type="strand" evidence="10">
    <location>
        <begin position="100"/>
        <end position="109"/>
    </location>
</feature>
<feature type="helix" evidence="10">
    <location>
        <begin position="110"/>
        <end position="112"/>
    </location>
</feature>
<feature type="strand" evidence="10">
    <location>
        <begin position="113"/>
        <end position="119"/>
    </location>
</feature>
<feature type="strand" evidence="10">
    <location>
        <begin position="128"/>
        <end position="134"/>
    </location>
</feature>
<feature type="turn" evidence="10">
    <location>
        <begin position="135"/>
        <end position="138"/>
    </location>
</feature>
<feature type="strand" evidence="10">
    <location>
        <begin position="139"/>
        <end position="146"/>
    </location>
</feature>
<feature type="strand" evidence="10">
    <location>
        <begin position="152"/>
        <end position="161"/>
    </location>
</feature>
<feature type="helix" evidence="10">
    <location>
        <begin position="162"/>
        <end position="164"/>
    </location>
</feature>
<feature type="strand" evidence="10">
    <location>
        <begin position="166"/>
        <end position="178"/>
    </location>
</feature>
<gene>
    <name type="primary">isdA</name>
    <name type="synonym">frpA</name>
    <name type="synonym">stbA</name>
    <name type="ordered locus">SAOUHSC_01081</name>
</gene>
<sequence>MTKHYLNSKYQSEQRSSAMKKITMGTASIILGSLVYIGADSQQVNAATEATNATNNQSTQVSQATSQPINFQVQKDGSSEKSHMDDYMQHPGKVIKQNNKYYFQTVLNNASFWKEYKFYNANNQELATTVVNDNKKADTRTINVAVEPGYKSLTTKVHIVVPQINYNHRYTTHLEFEKAIPTLADAAKPNNVKPVQPKPAQPKTPTEQTKPVQPKVEKVKPTVTTTSKVEDNHSTKVVSTDTTKDQTKTQTAHTVKTAQTAQEQNKVQTPVKDVATAKSESNNQAVSDNKSQQTNKVTKHNETPKQASKAKELPKTGLTSVDNFISTVAFATLALLGSLSLLLFKRKESK</sequence>
<protein>
    <recommendedName>
        <fullName>Iron-regulated surface determinant protein A</fullName>
    </recommendedName>
    <alternativeName>
        <fullName>Fur-regulated protein A</fullName>
    </alternativeName>
    <alternativeName>
        <fullName>Staphylococcal transferrin-binding protein A</fullName>
    </alternativeName>
</protein>
<proteinExistence type="evidence at protein level"/>
<comment type="function">
    <text evidence="2 3">Cell wall-anchored surface receptor that participates in the extraction of heme from oxidized methemoglobin/metHb to enable growth on hemoglobin as a sole iron source (By similarity). Receives heme from IsdB and transfers it to IsdC (By similarity). Also plays a role in the inhibition of host immune response. Protects S.aureus against the bactericidal protease activity of apolactoferrin. Decreases bacterial cellular hydrophobicity, which renders S.aureus resistant to bactericidal human skin fatty acids as well as to beta-defensins and cathelicidin. Also binds fibronectin and chains B-beta and gamma of fibrinogen, promoting clumping of S.aureus with fibrinogen. Involved in adherence of S.aureus to human desquamated nasal epithelial cells and is required for nasal colonization (By similarity).</text>
</comment>
<comment type="subunit">
    <text evidence="2 3">Monomer. Interacts with IsdC (By similarity). Interacts with IsdB (By similarity).</text>
</comment>
<comment type="subcellular location">
    <subcellularLocation>
        <location evidence="2">Secreted</location>
        <location evidence="2">Cell wall</location>
        <topology evidence="2">Peptidoglycan-anchor</topology>
    </subcellularLocation>
    <text evidence="2">Encodes an LPXTG motif-containing sorting signal that targets to the cell wall, which is catalyzed by sortase A.</text>
</comment>
<comment type="induction">
    <text>Repressed by fur in the presence of iron.</text>
</comment>
<comment type="domain">
    <text evidence="1">The NEAT domain is responsible for binding Fe(3+) and Fe(2+) heme and fibrinogen. The NEAT domain is an inhibitor of apolactoferrin activity, while the C-domain confers resistance to bovine lactoferricin (By similarity).</text>
</comment>
<comment type="miscellaneous">
    <text>Expressed in vivo during infection or colonization by S.aureus.</text>
</comment>
<comment type="similarity">
    <text evidence="8">Belongs to the IsdA family.</text>
</comment>